<reference key="1">
    <citation type="journal article" date="1998" name="Science">
        <title>Complete genome sequence of Treponema pallidum, the syphilis spirochete.</title>
        <authorList>
            <person name="Fraser C.M."/>
            <person name="Norris S.J."/>
            <person name="Weinstock G.M."/>
            <person name="White O."/>
            <person name="Sutton G.G."/>
            <person name="Dodson R.J."/>
            <person name="Gwinn M.L."/>
            <person name="Hickey E.K."/>
            <person name="Clayton R.A."/>
            <person name="Ketchum K.A."/>
            <person name="Sodergren E."/>
            <person name="Hardham J.M."/>
            <person name="McLeod M.P."/>
            <person name="Salzberg S.L."/>
            <person name="Peterson J.D."/>
            <person name="Khalak H.G."/>
            <person name="Richardson D.L."/>
            <person name="Howell J.K."/>
            <person name="Chidambaram M."/>
            <person name="Utterback T.R."/>
            <person name="McDonald L.A."/>
            <person name="Artiach P."/>
            <person name="Bowman C."/>
            <person name="Cotton M.D."/>
            <person name="Fujii C."/>
            <person name="Garland S.A."/>
            <person name="Hatch B."/>
            <person name="Horst K."/>
            <person name="Roberts K.M."/>
            <person name="Sandusky M."/>
            <person name="Weidman J.F."/>
            <person name="Smith H.O."/>
            <person name="Venter J.C."/>
        </authorList>
    </citation>
    <scope>NUCLEOTIDE SEQUENCE [LARGE SCALE GENOMIC DNA]</scope>
    <source>
        <strain>Nichols</strain>
    </source>
</reference>
<feature type="chain" id="PRO_0000182017" description="Probable lipid II flippase MurJ">
    <location>
        <begin position="1"/>
        <end position="526"/>
    </location>
</feature>
<feature type="transmembrane region" description="Helical" evidence="1">
    <location>
        <begin position="35"/>
        <end position="55"/>
    </location>
</feature>
<feature type="transmembrane region" description="Helical" evidence="1">
    <location>
        <begin position="58"/>
        <end position="78"/>
    </location>
</feature>
<feature type="transmembrane region" description="Helical" evidence="1">
    <location>
        <begin position="96"/>
        <end position="116"/>
    </location>
</feature>
<feature type="transmembrane region" description="Helical" evidence="1">
    <location>
        <begin position="137"/>
        <end position="157"/>
    </location>
</feature>
<feature type="transmembrane region" description="Helical" evidence="1">
    <location>
        <begin position="160"/>
        <end position="180"/>
    </location>
</feature>
<feature type="transmembrane region" description="Helical" evidence="1">
    <location>
        <begin position="190"/>
        <end position="210"/>
    </location>
</feature>
<feature type="transmembrane region" description="Helical" evidence="1">
    <location>
        <begin position="235"/>
        <end position="255"/>
    </location>
</feature>
<feature type="transmembrane region" description="Helical" evidence="1">
    <location>
        <begin position="281"/>
        <end position="301"/>
    </location>
</feature>
<feature type="transmembrane region" description="Helical" evidence="1">
    <location>
        <begin position="313"/>
        <end position="333"/>
    </location>
</feature>
<feature type="transmembrane region" description="Helical" evidence="1">
    <location>
        <begin position="362"/>
        <end position="382"/>
    </location>
</feature>
<feature type="transmembrane region" description="Helical" evidence="1">
    <location>
        <begin position="391"/>
        <end position="411"/>
    </location>
</feature>
<feature type="transmembrane region" description="Helical" evidence="1">
    <location>
        <begin position="415"/>
        <end position="435"/>
    </location>
</feature>
<feature type="transmembrane region" description="Helical" evidence="1">
    <location>
        <begin position="459"/>
        <end position="479"/>
    </location>
</feature>
<feature type="transmembrane region" description="Helical" evidence="1">
    <location>
        <begin position="489"/>
        <end position="509"/>
    </location>
</feature>
<accession>O83529</accession>
<comment type="function">
    <text evidence="1">Involved in peptidoglycan biosynthesis. Transports lipid-linked peptidoglycan precursors from the inner to the outer leaflet of the cytoplasmic membrane.</text>
</comment>
<comment type="pathway">
    <text evidence="1">Cell wall biogenesis; peptidoglycan biosynthesis.</text>
</comment>
<comment type="subcellular location">
    <subcellularLocation>
        <location evidence="1">Cell inner membrane</location>
        <topology evidence="1">Multi-pass membrane protein</topology>
    </subcellularLocation>
</comment>
<comment type="similarity">
    <text evidence="1">Belongs to the MurJ/MviN family.</text>
</comment>
<keyword id="KW-0997">Cell inner membrane</keyword>
<keyword id="KW-1003">Cell membrane</keyword>
<keyword id="KW-0133">Cell shape</keyword>
<keyword id="KW-0961">Cell wall biogenesis/degradation</keyword>
<keyword id="KW-0472">Membrane</keyword>
<keyword id="KW-0573">Peptidoglycan synthesis</keyword>
<keyword id="KW-1185">Reference proteome</keyword>
<keyword id="KW-0812">Transmembrane</keyword>
<keyword id="KW-1133">Transmembrane helix</keyword>
<keyword id="KW-0813">Transport</keyword>
<organism>
    <name type="scientific">Treponema pallidum (strain Nichols)</name>
    <dbReference type="NCBI Taxonomy" id="243276"/>
    <lineage>
        <taxon>Bacteria</taxon>
        <taxon>Pseudomonadati</taxon>
        <taxon>Spirochaetota</taxon>
        <taxon>Spirochaetia</taxon>
        <taxon>Spirochaetales</taxon>
        <taxon>Treponemataceae</taxon>
        <taxon>Treponema</taxon>
    </lineage>
</organism>
<protein>
    <recommendedName>
        <fullName evidence="1">Probable lipid II flippase MurJ</fullName>
    </recommendedName>
</protein>
<proteinExistence type="inferred from homology"/>
<gene>
    <name evidence="1" type="primary">murJ</name>
    <name type="synonym">mviN</name>
    <name type="ordered locus">TP_0516</name>
</gene>
<sequence>MKSKSSLLKSGLLLSLLTLVSRVLGLAREVVKSTLMGTSATADAFTVAFMIPNLFRRLFAENAISVAFIPVFTQHYSMPSSAQVPCSSKTKEFLSAIFTLMSSVTASISLIGILGAPYIVRLFDTDQSLTVSLTRLMFPYLWMISLAAFFQGMLHSIKVFVPSGCTPIFFNVSVIFSMYFLNVSHMNVAIAAAIGVLIGGCAQALFQLIFVYMHGFRFTLQSPLKAMHDEGVRRIIALLLPTTVGIATYLLNDLVCTALATSVEIGVAASVQYSLRIQELLLGIFIVSLSSVVLPDLSFHVMRKDWQSFEDLLITAIKIVMLITIPATFFVLFSSDRIITLVYKNAIFNELSVRMTATIFRWHSVGMLAIALNRVLISAFYAQHNSFAPMIAGTISFVTNIILATLLFIPLGGKGIAFSLSAASMVQTVFLWMFLKRSWQITIPSLYKTSLYYGVKITLFSVIALVPTWASSFFTAYFFPGSHKIISHGVPLCVEALIFSCTGCILLLLSRDEFAYKALRSIRFCR</sequence>
<dbReference type="EMBL" id="AE000520">
    <property type="protein sequence ID" value="AAC65504.1"/>
    <property type="molecule type" value="Genomic_DNA"/>
</dbReference>
<dbReference type="PIR" id="C71315">
    <property type="entry name" value="C71315"/>
</dbReference>
<dbReference type="RefSeq" id="WP_010881965.1">
    <property type="nucleotide sequence ID" value="NC_021490.2"/>
</dbReference>
<dbReference type="SMR" id="O83529"/>
<dbReference type="IntAct" id="O83529">
    <property type="interactions" value="2"/>
</dbReference>
<dbReference type="STRING" id="243276.TP_0516"/>
<dbReference type="EnsemblBacteria" id="AAC65504">
    <property type="protein sequence ID" value="AAC65504"/>
    <property type="gene ID" value="TP_0516"/>
</dbReference>
<dbReference type="GeneID" id="93876285"/>
<dbReference type="KEGG" id="tpa:TP_0516"/>
<dbReference type="KEGG" id="tpw:TPANIC_0516"/>
<dbReference type="eggNOG" id="COG0728">
    <property type="taxonomic scope" value="Bacteria"/>
</dbReference>
<dbReference type="HOGENOM" id="CLU_006797_5_0_12"/>
<dbReference type="OrthoDB" id="9804143at2"/>
<dbReference type="UniPathway" id="UPA00219"/>
<dbReference type="Proteomes" id="UP000000811">
    <property type="component" value="Chromosome"/>
</dbReference>
<dbReference type="GO" id="GO:0005886">
    <property type="term" value="C:plasma membrane"/>
    <property type="evidence" value="ECO:0007669"/>
    <property type="project" value="UniProtKB-SubCell"/>
</dbReference>
<dbReference type="GO" id="GO:0015648">
    <property type="term" value="F:lipid-linked peptidoglycan transporter activity"/>
    <property type="evidence" value="ECO:0007669"/>
    <property type="project" value="UniProtKB-UniRule"/>
</dbReference>
<dbReference type="GO" id="GO:0071555">
    <property type="term" value="P:cell wall organization"/>
    <property type="evidence" value="ECO:0007669"/>
    <property type="project" value="UniProtKB-KW"/>
</dbReference>
<dbReference type="GO" id="GO:0034204">
    <property type="term" value="P:lipid translocation"/>
    <property type="evidence" value="ECO:0007669"/>
    <property type="project" value="TreeGrafter"/>
</dbReference>
<dbReference type="GO" id="GO:0009252">
    <property type="term" value="P:peptidoglycan biosynthetic process"/>
    <property type="evidence" value="ECO:0007669"/>
    <property type="project" value="UniProtKB-UniRule"/>
</dbReference>
<dbReference type="GO" id="GO:0008360">
    <property type="term" value="P:regulation of cell shape"/>
    <property type="evidence" value="ECO:0007669"/>
    <property type="project" value="UniProtKB-KW"/>
</dbReference>
<dbReference type="CDD" id="cd13123">
    <property type="entry name" value="MATE_MurJ_like"/>
    <property type="match status" value="1"/>
</dbReference>
<dbReference type="HAMAP" id="MF_02078">
    <property type="entry name" value="MurJ_MviN"/>
    <property type="match status" value="1"/>
</dbReference>
<dbReference type="InterPro" id="IPR051050">
    <property type="entry name" value="Lipid_II_flippase_MurJ/MviN"/>
</dbReference>
<dbReference type="InterPro" id="IPR004268">
    <property type="entry name" value="MurJ"/>
</dbReference>
<dbReference type="NCBIfam" id="TIGR01695">
    <property type="entry name" value="murJ_mviN"/>
    <property type="match status" value="1"/>
</dbReference>
<dbReference type="PANTHER" id="PTHR47019">
    <property type="entry name" value="LIPID II FLIPPASE MURJ"/>
    <property type="match status" value="1"/>
</dbReference>
<dbReference type="PANTHER" id="PTHR47019:SF1">
    <property type="entry name" value="LIPID II FLIPPASE MURJ"/>
    <property type="match status" value="1"/>
</dbReference>
<dbReference type="Pfam" id="PF03023">
    <property type="entry name" value="MurJ"/>
    <property type="match status" value="1"/>
</dbReference>
<dbReference type="PIRSF" id="PIRSF002869">
    <property type="entry name" value="MviN"/>
    <property type="match status" value="1"/>
</dbReference>
<dbReference type="PRINTS" id="PR01806">
    <property type="entry name" value="VIRFACTRMVIN"/>
</dbReference>
<name>MURJ_TREPA</name>
<evidence type="ECO:0000255" key="1">
    <source>
        <dbReference type="HAMAP-Rule" id="MF_02078"/>
    </source>
</evidence>